<feature type="signal peptide">
    <location>
        <begin position="1"/>
        <end position="21"/>
    </location>
</feature>
<feature type="chain" id="PRO_0000041617" description="Zein-alpha A20">
    <location>
        <begin position="22"/>
        <end position="240"/>
    </location>
</feature>
<dbReference type="EMBL" id="V01476">
    <property type="protein sequence ID" value="CAA24723.1"/>
    <property type="molecule type" value="mRNA"/>
</dbReference>
<dbReference type="PIR" id="A22762">
    <property type="entry name" value="ZIZM2"/>
</dbReference>
<dbReference type="PaxDb" id="4577-AF546188.1_FGP005"/>
<dbReference type="MaizeGDB" id="58096"/>
<dbReference type="InParanoid" id="P04703"/>
<dbReference type="Proteomes" id="UP000007305">
    <property type="component" value="Unplaced"/>
</dbReference>
<dbReference type="ExpressionAtlas" id="P04703">
    <property type="expression patterns" value="baseline and differential"/>
</dbReference>
<dbReference type="GO" id="GO:0045735">
    <property type="term" value="F:nutrient reservoir activity"/>
    <property type="evidence" value="ECO:0007669"/>
    <property type="project" value="UniProtKB-KW"/>
</dbReference>
<dbReference type="InterPro" id="IPR052508">
    <property type="entry name" value="Maize_Zein_Storage"/>
</dbReference>
<dbReference type="InterPro" id="IPR002530">
    <property type="entry name" value="Zein"/>
</dbReference>
<dbReference type="PANTHER" id="PTHR48244:SF2">
    <property type="entry name" value="ZEIN-ALPHA 19C2"/>
    <property type="match status" value="1"/>
</dbReference>
<dbReference type="PANTHER" id="PTHR48244">
    <property type="entry name" value="ZEIN-ALPHA A20-RELATED"/>
    <property type="match status" value="1"/>
</dbReference>
<dbReference type="Pfam" id="PF01559">
    <property type="entry name" value="Zein"/>
    <property type="match status" value="1"/>
</dbReference>
<comment type="function">
    <text>Zeins are major seed storage proteins.</text>
</comment>
<comment type="miscellaneous">
    <text>The alpha zeins of 19 kDa and 22 kDa account for 70% of the total zein fraction. They are encoded by a large multigene family.</text>
</comment>
<comment type="miscellaneous">
    <text evidence="1">Structurally, 22K and 19K zeins are composed of nine adjacent, topologically antiparallel helices clustered within a distorted cylinder.</text>
</comment>
<comment type="similarity">
    <text evidence="2">Belongs to the zein family.</text>
</comment>
<name>ZEA7_MAIZE</name>
<accession>P04703</accession>
<organism>
    <name type="scientific">Zea mays</name>
    <name type="common">Maize</name>
    <dbReference type="NCBI Taxonomy" id="4577"/>
    <lineage>
        <taxon>Eukaryota</taxon>
        <taxon>Viridiplantae</taxon>
        <taxon>Streptophyta</taxon>
        <taxon>Embryophyta</taxon>
        <taxon>Tracheophyta</taxon>
        <taxon>Spermatophyta</taxon>
        <taxon>Magnoliopsida</taxon>
        <taxon>Liliopsida</taxon>
        <taxon>Poales</taxon>
        <taxon>Poaceae</taxon>
        <taxon>PACMAD clade</taxon>
        <taxon>Panicoideae</taxon>
        <taxon>Andropogonodae</taxon>
        <taxon>Andropogoneae</taxon>
        <taxon>Tripsacinae</taxon>
        <taxon>Zea</taxon>
    </lineage>
</organism>
<sequence>MATKIFSLLMLLALSACVANATIFPQCSQAPIASLLPPYLPSMIASVCENPALQPYRLQQAIAASNIPLSPLLFQQSPALSLVQSLVQTIRAQQLQQLVLPVINQVALANLSPYSQQQQFLPFNQLSTLNPAAYLQQQLLPFSQLATAYSQQQQLLPFNQLAALNPAAYLQQQILLPFSQLAAANRASFLTQQQLLPFYQQFAANPATLLQLQQLLPFVQLALTDPAASYQQHIIGGALF</sequence>
<evidence type="ECO:0000250" key="1">
    <source>
        <dbReference type="UniProtKB" id="P04698"/>
    </source>
</evidence>
<evidence type="ECO:0000305" key="2"/>
<reference key="1">
    <citation type="journal article" date="1982" name="EMBO J.">
        <title>Sequence analysis and comparison of cDNAs of the zein multigene family.</title>
        <authorList>
            <person name="Geraghty D.E."/>
            <person name="Messing J."/>
            <person name="Rubenstein I."/>
        </authorList>
    </citation>
    <scope>NUCLEOTIDE SEQUENCE [MRNA]</scope>
</reference>
<keyword id="KW-1185">Reference proteome</keyword>
<keyword id="KW-0677">Repeat</keyword>
<keyword id="KW-0708">Seed storage protein</keyword>
<keyword id="KW-0732">Signal</keyword>
<keyword id="KW-0758">Storage protein</keyword>
<proteinExistence type="evidence at transcript level"/>
<protein>
    <recommendedName>
        <fullName>Zein-alpha A20</fullName>
    </recommendedName>
    <alternativeName>
        <fullName>19 kDa zein A20</fullName>
    </alternativeName>
</protein>